<feature type="chain" id="PRO_0000195437" description="Ribonuclease H">
    <location>
        <begin position="1"/>
        <end position="264"/>
    </location>
</feature>
<feature type="domain" description="RNase H type-1" evidence="2">
    <location>
        <begin position="120"/>
        <end position="263"/>
    </location>
</feature>
<feature type="region of interest" description="Disordered" evidence="3">
    <location>
        <begin position="55"/>
        <end position="88"/>
    </location>
</feature>
<feature type="compositionally biased region" description="Low complexity" evidence="3">
    <location>
        <begin position="56"/>
        <end position="85"/>
    </location>
</feature>
<feature type="binding site" evidence="2">
    <location>
        <position position="129"/>
    </location>
    <ligand>
        <name>Mg(2+)</name>
        <dbReference type="ChEBI" id="CHEBI:18420"/>
        <label>1</label>
    </ligand>
</feature>
<feature type="binding site" evidence="2">
    <location>
        <position position="129"/>
    </location>
    <ligand>
        <name>Mg(2+)</name>
        <dbReference type="ChEBI" id="CHEBI:18420"/>
        <label>2</label>
    </ligand>
</feature>
<feature type="binding site" evidence="2">
    <location>
        <position position="171"/>
    </location>
    <ligand>
        <name>Mg(2+)</name>
        <dbReference type="ChEBI" id="CHEBI:18420"/>
        <label>1</label>
    </ligand>
</feature>
<feature type="binding site" evidence="2">
    <location>
        <position position="191"/>
    </location>
    <ligand>
        <name>Mg(2+)</name>
        <dbReference type="ChEBI" id="CHEBI:18420"/>
        <label>1</label>
    </ligand>
</feature>
<feature type="binding site" evidence="2">
    <location>
        <position position="255"/>
    </location>
    <ligand>
        <name>Mg(2+)</name>
        <dbReference type="ChEBI" id="CHEBI:18420"/>
        <label>2</label>
    </ligand>
</feature>
<feature type="modified residue" description="Phosphoserine" evidence="4">
    <location>
        <position position="97"/>
    </location>
</feature>
<feature type="sequence variant" description="In strain: 912.">
    <original>D</original>
    <variation>E</variation>
    <location>
        <position position="129"/>
    </location>
</feature>
<comment type="function">
    <text evidence="1">Endonuclease that specifically degrades the RNA of RNA-DNA hybrids.</text>
</comment>
<comment type="catalytic activity">
    <reaction evidence="2">
        <text>Endonucleolytic cleavage to 5'-phosphomonoester.</text>
        <dbReference type="EC" id="3.1.26.4"/>
    </reaction>
</comment>
<comment type="cofactor">
    <cofactor evidence="1">
        <name>Mg(2+)</name>
        <dbReference type="ChEBI" id="CHEBI:18420"/>
    </cofactor>
    <text evidence="1">Binds 1 Mg(2+) ion per subunit. May bind a second metal ion at a regulatory site, or after substrate binding.</text>
</comment>
<comment type="similarity">
    <text evidence="5">Belongs to the RNase H family.</text>
</comment>
<name>RNH1_SCHPO</name>
<gene>
    <name type="primary">rnh1</name>
    <name type="ORF">SPBC336.06c</name>
</gene>
<reference key="1">
    <citation type="submission" date="1998-02" db="EMBL/GenBank/DDBJ databases">
        <title>Genomic and cDNA sequences of Schizosaccharomyces pombe ribonuclease H1.</title>
        <authorList>
            <person name="Tozawa Y."/>
            <person name="Crouch R.J."/>
        </authorList>
    </citation>
    <scope>NUCLEOTIDE SEQUENCE [GENOMIC DNA]</scope>
    <source>
        <strain>912</strain>
    </source>
</reference>
<reference key="2">
    <citation type="journal article" date="2002" name="Nature">
        <title>The genome sequence of Schizosaccharomyces pombe.</title>
        <authorList>
            <person name="Wood V."/>
            <person name="Gwilliam R."/>
            <person name="Rajandream M.A."/>
            <person name="Lyne M.H."/>
            <person name="Lyne R."/>
            <person name="Stewart A."/>
            <person name="Sgouros J.G."/>
            <person name="Peat N."/>
            <person name="Hayles J."/>
            <person name="Baker S.G."/>
            <person name="Basham D."/>
            <person name="Bowman S."/>
            <person name="Brooks K."/>
            <person name="Brown D."/>
            <person name="Brown S."/>
            <person name="Chillingworth T."/>
            <person name="Churcher C.M."/>
            <person name="Collins M."/>
            <person name="Connor R."/>
            <person name="Cronin A."/>
            <person name="Davis P."/>
            <person name="Feltwell T."/>
            <person name="Fraser A."/>
            <person name="Gentles S."/>
            <person name="Goble A."/>
            <person name="Hamlin N."/>
            <person name="Harris D.E."/>
            <person name="Hidalgo J."/>
            <person name="Hodgson G."/>
            <person name="Holroyd S."/>
            <person name="Hornsby T."/>
            <person name="Howarth S."/>
            <person name="Huckle E.J."/>
            <person name="Hunt S."/>
            <person name="Jagels K."/>
            <person name="James K.D."/>
            <person name="Jones L."/>
            <person name="Jones M."/>
            <person name="Leather S."/>
            <person name="McDonald S."/>
            <person name="McLean J."/>
            <person name="Mooney P."/>
            <person name="Moule S."/>
            <person name="Mungall K.L."/>
            <person name="Murphy L.D."/>
            <person name="Niblett D."/>
            <person name="Odell C."/>
            <person name="Oliver K."/>
            <person name="O'Neil S."/>
            <person name="Pearson D."/>
            <person name="Quail M.A."/>
            <person name="Rabbinowitsch E."/>
            <person name="Rutherford K.M."/>
            <person name="Rutter S."/>
            <person name="Saunders D."/>
            <person name="Seeger K."/>
            <person name="Sharp S."/>
            <person name="Skelton J."/>
            <person name="Simmonds M.N."/>
            <person name="Squares R."/>
            <person name="Squares S."/>
            <person name="Stevens K."/>
            <person name="Taylor K."/>
            <person name="Taylor R.G."/>
            <person name="Tivey A."/>
            <person name="Walsh S.V."/>
            <person name="Warren T."/>
            <person name="Whitehead S."/>
            <person name="Woodward J.R."/>
            <person name="Volckaert G."/>
            <person name="Aert R."/>
            <person name="Robben J."/>
            <person name="Grymonprez B."/>
            <person name="Weltjens I."/>
            <person name="Vanstreels E."/>
            <person name="Rieger M."/>
            <person name="Schaefer M."/>
            <person name="Mueller-Auer S."/>
            <person name="Gabel C."/>
            <person name="Fuchs M."/>
            <person name="Duesterhoeft A."/>
            <person name="Fritzc C."/>
            <person name="Holzer E."/>
            <person name="Moestl D."/>
            <person name="Hilbert H."/>
            <person name="Borzym K."/>
            <person name="Langer I."/>
            <person name="Beck A."/>
            <person name="Lehrach H."/>
            <person name="Reinhardt R."/>
            <person name="Pohl T.M."/>
            <person name="Eger P."/>
            <person name="Zimmermann W."/>
            <person name="Wedler H."/>
            <person name="Wambutt R."/>
            <person name="Purnelle B."/>
            <person name="Goffeau A."/>
            <person name="Cadieu E."/>
            <person name="Dreano S."/>
            <person name="Gloux S."/>
            <person name="Lelaure V."/>
            <person name="Mottier S."/>
            <person name="Galibert F."/>
            <person name="Aves S.J."/>
            <person name="Xiang Z."/>
            <person name="Hunt C."/>
            <person name="Moore K."/>
            <person name="Hurst S.M."/>
            <person name="Lucas M."/>
            <person name="Rochet M."/>
            <person name="Gaillardin C."/>
            <person name="Tallada V.A."/>
            <person name="Garzon A."/>
            <person name="Thode G."/>
            <person name="Daga R.R."/>
            <person name="Cruzado L."/>
            <person name="Jimenez J."/>
            <person name="Sanchez M."/>
            <person name="del Rey F."/>
            <person name="Benito J."/>
            <person name="Dominguez A."/>
            <person name="Revuelta J.L."/>
            <person name="Moreno S."/>
            <person name="Armstrong J."/>
            <person name="Forsburg S.L."/>
            <person name="Cerutti L."/>
            <person name="Lowe T."/>
            <person name="McCombie W.R."/>
            <person name="Paulsen I."/>
            <person name="Potashkin J."/>
            <person name="Shpakovski G.V."/>
            <person name="Ussery D."/>
            <person name="Barrell B.G."/>
            <person name="Nurse P."/>
        </authorList>
    </citation>
    <scope>NUCLEOTIDE SEQUENCE [LARGE SCALE GENOMIC DNA]</scope>
    <source>
        <strain>972 / ATCC 24843</strain>
    </source>
</reference>
<reference key="3">
    <citation type="journal article" date="2008" name="J. Proteome Res.">
        <title>Phosphoproteome analysis of fission yeast.</title>
        <authorList>
            <person name="Wilson-Grady J.T."/>
            <person name="Villen J."/>
            <person name="Gygi S.P."/>
        </authorList>
    </citation>
    <scope>PHOSPHORYLATION [LARGE SCALE ANALYSIS] AT SER-97</scope>
    <scope>IDENTIFICATION BY MASS SPECTROMETRY</scope>
</reference>
<protein>
    <recommendedName>
        <fullName>Ribonuclease H</fullName>
        <shortName>RNase H</shortName>
        <ecNumber>3.1.26.4</ecNumber>
    </recommendedName>
</protein>
<organism>
    <name type="scientific">Schizosaccharomyces pombe (strain 972 / ATCC 24843)</name>
    <name type="common">Fission yeast</name>
    <dbReference type="NCBI Taxonomy" id="284812"/>
    <lineage>
        <taxon>Eukaryota</taxon>
        <taxon>Fungi</taxon>
        <taxon>Dikarya</taxon>
        <taxon>Ascomycota</taxon>
        <taxon>Taphrinomycotina</taxon>
        <taxon>Schizosaccharomycetes</taxon>
        <taxon>Schizosaccharomycetales</taxon>
        <taxon>Schizosaccharomycetaceae</taxon>
        <taxon>Schizosaccharomyces</taxon>
    </lineage>
</organism>
<proteinExistence type="evidence at protein level"/>
<keyword id="KW-0255">Endonuclease</keyword>
<keyword id="KW-0378">Hydrolase</keyword>
<keyword id="KW-0460">Magnesium</keyword>
<keyword id="KW-0479">Metal-binding</keyword>
<keyword id="KW-0540">Nuclease</keyword>
<keyword id="KW-0597">Phosphoprotein</keyword>
<keyword id="KW-1185">Reference proteome</keyword>
<sequence length="264" mass="29421">MGGNKRAYYAVARGRNTGIYSTWDEASDQVKGYGGNRYKKFDSYEAAQEFCRTEGSRYSSSSGPYRRSTTSYGYSPYSSSSSNYSARHSDKYRKKISRSYSTEKDIEIFSNDTHEKSIACSDRQVVYADGSSLRNGKKGAVAGCGVFFGNDDPRNISVPLAGEEQTNNRAELQAIILALENTSGDLTIRSDSNYSIKSLTTWLPKWKKNDFKTSNSQPVKNLDLINRASDLMSDRNVSLEYVKGHSTDYGNQQADMLARRGASE</sequence>
<dbReference type="EC" id="3.1.26.4"/>
<dbReference type="EMBL" id="AF048992">
    <property type="protein sequence ID" value="AAC04366.1"/>
    <property type="molecule type" value="Genomic_DNA"/>
</dbReference>
<dbReference type="EMBL" id="CU329671">
    <property type="protein sequence ID" value="CAB58158.1"/>
    <property type="molecule type" value="Genomic_DNA"/>
</dbReference>
<dbReference type="PIR" id="T40244">
    <property type="entry name" value="T40244"/>
</dbReference>
<dbReference type="PIR" id="T43641">
    <property type="entry name" value="T43641"/>
</dbReference>
<dbReference type="RefSeq" id="NP_596126.1">
    <property type="nucleotide sequence ID" value="NM_001022044.2"/>
</dbReference>
<dbReference type="SMR" id="Q9UST8"/>
<dbReference type="BioGRID" id="276784">
    <property type="interactions" value="1"/>
</dbReference>
<dbReference type="FunCoup" id="Q9UST8">
    <property type="interactions" value="67"/>
</dbReference>
<dbReference type="STRING" id="284812.Q9UST8"/>
<dbReference type="iPTMnet" id="Q9UST8"/>
<dbReference type="PaxDb" id="4896-SPBC336.06c.1"/>
<dbReference type="EnsemblFungi" id="SPBC336.06c.1">
    <property type="protein sequence ID" value="SPBC336.06c.1:pep"/>
    <property type="gene ID" value="SPBC336.06c"/>
</dbReference>
<dbReference type="GeneID" id="2540252"/>
<dbReference type="KEGG" id="spo:2540252"/>
<dbReference type="PomBase" id="SPBC336.06c">
    <property type="gene designation" value="rnh1"/>
</dbReference>
<dbReference type="VEuPathDB" id="FungiDB:SPBC336.06c"/>
<dbReference type="eggNOG" id="KOG3752">
    <property type="taxonomic scope" value="Eukaryota"/>
</dbReference>
<dbReference type="HOGENOM" id="CLU_030894_0_5_1"/>
<dbReference type="InParanoid" id="Q9UST8"/>
<dbReference type="OMA" id="IRSMTEW"/>
<dbReference type="PhylomeDB" id="Q9UST8"/>
<dbReference type="PRO" id="PR:Q9UST8"/>
<dbReference type="Proteomes" id="UP000002485">
    <property type="component" value="Chromosome II"/>
</dbReference>
<dbReference type="GO" id="GO:0000785">
    <property type="term" value="C:chromatin"/>
    <property type="evidence" value="ECO:0000314"/>
    <property type="project" value="PomBase"/>
</dbReference>
<dbReference type="GO" id="GO:0005730">
    <property type="term" value="C:nucleolus"/>
    <property type="evidence" value="ECO:0007005"/>
    <property type="project" value="PomBase"/>
</dbReference>
<dbReference type="GO" id="GO:0005634">
    <property type="term" value="C:nucleus"/>
    <property type="evidence" value="ECO:0007005"/>
    <property type="project" value="PomBase"/>
</dbReference>
<dbReference type="GO" id="GO:0000287">
    <property type="term" value="F:magnesium ion binding"/>
    <property type="evidence" value="ECO:0007669"/>
    <property type="project" value="InterPro"/>
</dbReference>
<dbReference type="GO" id="GO:0003676">
    <property type="term" value="F:nucleic acid binding"/>
    <property type="evidence" value="ECO:0007669"/>
    <property type="project" value="InterPro"/>
</dbReference>
<dbReference type="GO" id="GO:0004523">
    <property type="term" value="F:RNA-DNA hybrid ribonuclease activity"/>
    <property type="evidence" value="ECO:0000315"/>
    <property type="project" value="PomBase"/>
</dbReference>
<dbReference type="GO" id="GO:0043137">
    <property type="term" value="P:DNA replication, removal of RNA primer"/>
    <property type="evidence" value="ECO:0000318"/>
    <property type="project" value="GO_Central"/>
</dbReference>
<dbReference type="GO" id="GO:1990505">
    <property type="term" value="P:mitotic DNA replication maintenance of fidelity"/>
    <property type="evidence" value="ECO:0000304"/>
    <property type="project" value="PomBase"/>
</dbReference>
<dbReference type="GO" id="GO:0006401">
    <property type="term" value="P:RNA catabolic process"/>
    <property type="evidence" value="ECO:0000315"/>
    <property type="project" value="PomBase"/>
</dbReference>
<dbReference type="CDD" id="cd09280">
    <property type="entry name" value="RNase_HI_eukaryote_like"/>
    <property type="match status" value="1"/>
</dbReference>
<dbReference type="FunFam" id="3.40.970.10:FF:000002">
    <property type="entry name" value="Ribonuclease H"/>
    <property type="match status" value="1"/>
</dbReference>
<dbReference type="Gene3D" id="3.30.420.10">
    <property type="entry name" value="Ribonuclease H-like superfamily/Ribonuclease H"/>
    <property type="match status" value="1"/>
</dbReference>
<dbReference type="Gene3D" id="3.40.970.10">
    <property type="entry name" value="Ribonuclease H1, N-terminal domain"/>
    <property type="match status" value="1"/>
</dbReference>
<dbReference type="InterPro" id="IPR009027">
    <property type="entry name" value="Ribosomal_bL9/RNase_H1_N"/>
</dbReference>
<dbReference type="InterPro" id="IPR050092">
    <property type="entry name" value="RNase_H"/>
</dbReference>
<dbReference type="InterPro" id="IPR017067">
    <property type="entry name" value="RNase_H1_euk"/>
</dbReference>
<dbReference type="InterPro" id="IPR011320">
    <property type="entry name" value="RNase_H1_N"/>
</dbReference>
<dbReference type="InterPro" id="IPR037056">
    <property type="entry name" value="RNase_H1_N_sf"/>
</dbReference>
<dbReference type="InterPro" id="IPR012337">
    <property type="entry name" value="RNaseH-like_sf"/>
</dbReference>
<dbReference type="InterPro" id="IPR002156">
    <property type="entry name" value="RNaseH_domain"/>
</dbReference>
<dbReference type="InterPro" id="IPR036397">
    <property type="entry name" value="RNaseH_sf"/>
</dbReference>
<dbReference type="PANTHER" id="PTHR10642">
    <property type="entry name" value="RIBONUCLEASE H1"/>
    <property type="match status" value="1"/>
</dbReference>
<dbReference type="PANTHER" id="PTHR10642:SF26">
    <property type="entry name" value="RIBONUCLEASE H1"/>
    <property type="match status" value="1"/>
</dbReference>
<dbReference type="Pfam" id="PF01693">
    <property type="entry name" value="Cauli_VI"/>
    <property type="match status" value="1"/>
</dbReference>
<dbReference type="Pfam" id="PF00075">
    <property type="entry name" value="RNase_H"/>
    <property type="match status" value="1"/>
</dbReference>
<dbReference type="PIRSF" id="PIRSF036852">
    <property type="entry name" value="Ribonuclease_H1_euk"/>
    <property type="match status" value="1"/>
</dbReference>
<dbReference type="SUPFAM" id="SSF55658">
    <property type="entry name" value="L9 N-domain-like"/>
    <property type="match status" value="1"/>
</dbReference>
<dbReference type="SUPFAM" id="SSF53098">
    <property type="entry name" value="Ribonuclease H-like"/>
    <property type="match status" value="1"/>
</dbReference>
<dbReference type="PROSITE" id="PS50879">
    <property type="entry name" value="RNASE_H_1"/>
    <property type="match status" value="1"/>
</dbReference>
<evidence type="ECO:0000250" key="1"/>
<evidence type="ECO:0000255" key="2">
    <source>
        <dbReference type="PROSITE-ProRule" id="PRU00408"/>
    </source>
</evidence>
<evidence type="ECO:0000256" key="3">
    <source>
        <dbReference type="SAM" id="MobiDB-lite"/>
    </source>
</evidence>
<evidence type="ECO:0000269" key="4">
    <source>
    </source>
</evidence>
<evidence type="ECO:0000305" key="5"/>
<accession>Q9UST8</accession>
<accession>O42798</accession>